<comment type="function">
    <text evidence="5">Cadherins are calcium-dependent cell adhesion proteins. They preferentially interact with themselves in a homophilic manner in connecting cells; cadherins may thus contribute to the sorting of heterogeneous cell types. Cadherin-24 mediate strong cell-cell adhesion.</text>
</comment>
<comment type="subunit">
    <text>Associates with alpha-, beta- and delta-catenins.</text>
</comment>
<comment type="subcellular location">
    <subcellularLocation>
        <location evidence="9">Cell membrane</location>
        <topology evidence="9">Single-pass type I membrane protein</topology>
    </subcellularLocation>
</comment>
<comment type="alternative products">
    <event type="alternative splicing"/>
    <isoform>
        <id>Q86UP0-1</id>
        <name>1</name>
        <name>Long form</name>
        <sequence type="displayed"/>
    </isoform>
    <isoform>
        <id>Q86UP0-2</id>
        <name>2</name>
        <name>Short form</name>
        <sequence type="described" ref="VSP_008717"/>
    </isoform>
    <isoform>
        <id>Q86UP0-3</id>
        <name>3</name>
        <sequence type="described" ref="VSP_008718 VSP_008719"/>
    </isoform>
</comment>
<comment type="domain">
    <text evidence="1">Three calcium ions are usually bound at the interface of each cadherin domain and rigidify the connections, imparting a strong curvature to the full-length ectodomain.</text>
</comment>
<keyword id="KW-0025">Alternative splicing</keyword>
<keyword id="KW-0106">Calcium</keyword>
<keyword id="KW-0130">Cell adhesion</keyword>
<keyword id="KW-1003">Cell membrane</keyword>
<keyword id="KW-0165">Cleavage on pair of basic residues</keyword>
<keyword id="KW-0325">Glycoprotein</keyword>
<keyword id="KW-0472">Membrane</keyword>
<keyword id="KW-0479">Metal-binding</keyword>
<keyword id="KW-1267">Proteomics identification</keyword>
<keyword id="KW-1185">Reference proteome</keyword>
<keyword id="KW-0677">Repeat</keyword>
<keyword id="KW-0732">Signal</keyword>
<keyword id="KW-0812">Transmembrane</keyword>
<keyword id="KW-1133">Transmembrane helix</keyword>
<sequence>MWGLVRLLLAWLGGWGCMGRLAAPARAWAGSREHPGPALLRTRRSWVWNQFFVIEEYAGPEPVLIGKLHSDVDRGEGRTKYLLTGEGAGTVFVIDEATGNIHVTKSLDREEKAQYVLLAQAVDRASNRPLEPPSEFIIKVQDINDNPPIFPLGPYHATVPEMSNVGTSVIQVTAHDADDPSYGNSAKLVYTVLDGLPFFSVDPQTGVVRTAIPNMDRETQEEFLVVIQAKDMGGHMGGLSGSTTVTVTLSDVNDNPPKFPQSLYQFSVVETAGPGTLVGRLRAQDPDLGDNALMAYSILDGEGSEAFSISTDLQGRDGLLTVRKPLDFESQRSYSFRVEATNTLIDPAYLRRGPFKDVASVRVAVQDAPEPPAFTQAAYHLTVPENKAPGTLVGQISAADLDSPASPIRYSILPHSDPERCFSIQPEEGTIHTAAPLDREARAWHNLTVLATELGWSWGPERGWVPLLVAEWSAPAAPPQRSPVGSAVGIPQDSSAQASRVQVAIQTLDENDNAPQLAEPYDTFVCDSAAPGQLIQVIRALDRDEVGNSSHVSFQGPLGPDANFTVQDNRDGSASLLLPSRPAPPRHAPYLVPIELWDWGQPALSSTATVTVSVCRCQPDGSVASCWPEAHLSAAGLSTGALLAIITCVGALLALVVLFVALRRQKQEALMVLEEEDVRENIITYDDEGGGEEDTEAFDITALQNPDGAAPPAPGPPARRDVLPRARVSRQPRPPGPADVAQLLALRLREADEDPGVPPYDSVQVYGYEGRGSSCGSLSSLGSGSEAGGAPGPAEPLDDWGPLFRTLAELYGAKEPPAP</sequence>
<gene>
    <name type="primary">CDH24</name>
    <name type="synonym">CDH11L</name>
    <name type="ORF">UNQ2834/PRO34009</name>
</gene>
<name>CAD24_HUMAN</name>
<reference key="1">
    <citation type="journal article" date="2003" name="J. Biol. Chem.">
        <title>Characterization of cadherin-24, a novel alternatively spliced type II cadherin.</title>
        <authorList>
            <person name="Katafiasz B.J."/>
            <person name="Nieman M.T."/>
            <person name="Wheelock M.J."/>
            <person name="Johnson K.R."/>
        </authorList>
    </citation>
    <scope>NUCLEOTIDE SEQUENCE [MRNA] (ISOFORMS 1 AND 2)</scope>
    <scope>FUNCTION</scope>
    <scope>INTERACTION WITH CATENINS</scope>
</reference>
<reference key="2">
    <citation type="journal article" date="2003" name="Genome Res.">
        <title>The secreted protein discovery initiative (SPDI), a large-scale effort to identify novel human secreted and transmembrane proteins: a bioinformatics assessment.</title>
        <authorList>
            <person name="Clark H.F."/>
            <person name="Gurney A.L."/>
            <person name="Abaya E."/>
            <person name="Baker K."/>
            <person name="Baldwin D.T."/>
            <person name="Brush J."/>
            <person name="Chen J."/>
            <person name="Chow B."/>
            <person name="Chui C."/>
            <person name="Crowley C."/>
            <person name="Currell B."/>
            <person name="Deuel B."/>
            <person name="Dowd P."/>
            <person name="Eaton D."/>
            <person name="Foster J.S."/>
            <person name="Grimaldi C."/>
            <person name="Gu Q."/>
            <person name="Hass P.E."/>
            <person name="Heldens S."/>
            <person name="Huang A."/>
            <person name="Kim H.S."/>
            <person name="Klimowski L."/>
            <person name="Jin Y."/>
            <person name="Johnson S."/>
            <person name="Lee J."/>
            <person name="Lewis L."/>
            <person name="Liao D."/>
            <person name="Mark M.R."/>
            <person name="Robbie E."/>
            <person name="Sanchez C."/>
            <person name="Schoenfeld J."/>
            <person name="Seshagiri S."/>
            <person name="Simmons L."/>
            <person name="Singh J."/>
            <person name="Smith V."/>
            <person name="Stinson J."/>
            <person name="Vagts A."/>
            <person name="Vandlen R.L."/>
            <person name="Watanabe C."/>
            <person name="Wieand D."/>
            <person name="Woods K."/>
            <person name="Xie M.-H."/>
            <person name="Yansura D.G."/>
            <person name="Yi S."/>
            <person name="Yu G."/>
            <person name="Yuan J."/>
            <person name="Zhang M."/>
            <person name="Zhang Z."/>
            <person name="Goddard A.D."/>
            <person name="Wood W.I."/>
            <person name="Godowski P.J."/>
            <person name="Gray A.M."/>
        </authorList>
    </citation>
    <scope>NUCLEOTIDE SEQUENCE [LARGE SCALE MRNA] (ISOFORM 2)</scope>
</reference>
<reference key="3">
    <citation type="journal article" date="2007" name="BMC Genomics">
        <title>The full-ORF clone resource of the German cDNA consortium.</title>
        <authorList>
            <person name="Bechtel S."/>
            <person name="Rosenfelder H."/>
            <person name="Duda A."/>
            <person name="Schmidt C.P."/>
            <person name="Ernst U."/>
            <person name="Wellenreuther R."/>
            <person name="Mehrle A."/>
            <person name="Schuster C."/>
            <person name="Bahr A."/>
            <person name="Bloecker H."/>
            <person name="Heubner D."/>
            <person name="Hoerlein A."/>
            <person name="Michel G."/>
            <person name="Wedler H."/>
            <person name="Koehrer K."/>
            <person name="Ottenwaelder B."/>
            <person name="Poustka A."/>
            <person name="Wiemann S."/>
            <person name="Schupp I."/>
        </authorList>
    </citation>
    <scope>NUCLEOTIDE SEQUENCE [LARGE SCALE MRNA] (ISOFORM 3)</scope>
    <source>
        <tissue>Testis</tissue>
    </source>
</reference>
<reference key="4">
    <citation type="submission" date="2005-09" db="EMBL/GenBank/DDBJ databases">
        <authorList>
            <person name="Mural R.J."/>
            <person name="Istrail S."/>
            <person name="Sutton G.G."/>
            <person name="Florea L."/>
            <person name="Halpern A.L."/>
            <person name="Mobarry C.M."/>
            <person name="Lippert R."/>
            <person name="Walenz B."/>
            <person name="Shatkay H."/>
            <person name="Dew I."/>
            <person name="Miller J.R."/>
            <person name="Flanigan M.J."/>
            <person name="Edwards N.J."/>
            <person name="Bolanos R."/>
            <person name="Fasulo D."/>
            <person name="Halldorsson B.V."/>
            <person name="Hannenhalli S."/>
            <person name="Turner R."/>
            <person name="Yooseph S."/>
            <person name="Lu F."/>
            <person name="Nusskern D.R."/>
            <person name="Shue B.C."/>
            <person name="Zheng X.H."/>
            <person name="Zhong F."/>
            <person name="Delcher A.L."/>
            <person name="Huson D.H."/>
            <person name="Kravitz S.A."/>
            <person name="Mouchard L."/>
            <person name="Reinert K."/>
            <person name="Remington K.A."/>
            <person name="Clark A.G."/>
            <person name="Waterman M.S."/>
            <person name="Eichler E.E."/>
            <person name="Adams M.D."/>
            <person name="Hunkapiller M.W."/>
            <person name="Myers E.W."/>
            <person name="Venter J.C."/>
        </authorList>
    </citation>
    <scope>NUCLEOTIDE SEQUENCE [LARGE SCALE GENOMIC DNA]</scope>
</reference>
<organism>
    <name type="scientific">Homo sapiens</name>
    <name type="common">Human</name>
    <dbReference type="NCBI Taxonomy" id="9606"/>
    <lineage>
        <taxon>Eukaryota</taxon>
        <taxon>Metazoa</taxon>
        <taxon>Chordata</taxon>
        <taxon>Craniata</taxon>
        <taxon>Vertebrata</taxon>
        <taxon>Euteleostomi</taxon>
        <taxon>Mammalia</taxon>
        <taxon>Eutheria</taxon>
        <taxon>Euarchontoglires</taxon>
        <taxon>Primates</taxon>
        <taxon>Haplorrhini</taxon>
        <taxon>Catarrhini</taxon>
        <taxon>Hominidae</taxon>
        <taxon>Homo</taxon>
    </lineage>
</organism>
<protein>
    <recommendedName>
        <fullName>Cadherin-24</fullName>
    </recommendedName>
</protein>
<dbReference type="EMBL" id="AY260900">
    <property type="protein sequence ID" value="AAP20590.1"/>
    <property type="molecule type" value="mRNA"/>
</dbReference>
<dbReference type="EMBL" id="AY260901">
    <property type="protein sequence ID" value="AAP20591.1"/>
    <property type="molecule type" value="mRNA"/>
</dbReference>
<dbReference type="EMBL" id="AY358199">
    <property type="protein sequence ID" value="AAQ88566.1"/>
    <property type="molecule type" value="mRNA"/>
</dbReference>
<dbReference type="EMBL" id="AL137477">
    <property type="protein sequence ID" value="CAB70758.1"/>
    <property type="molecule type" value="mRNA"/>
</dbReference>
<dbReference type="EMBL" id="CH471078">
    <property type="protein sequence ID" value="EAW66190.1"/>
    <property type="molecule type" value="Genomic_DNA"/>
</dbReference>
<dbReference type="EMBL" id="CH471078">
    <property type="protein sequence ID" value="EAW66192.1"/>
    <property type="molecule type" value="Genomic_DNA"/>
</dbReference>
<dbReference type="CCDS" id="CCDS9585.1">
    <molecule id="Q86UP0-1"/>
</dbReference>
<dbReference type="CCDS" id="CCDS9586.1">
    <molecule id="Q86UP0-2"/>
</dbReference>
<dbReference type="PIR" id="T46418">
    <property type="entry name" value="T46418"/>
</dbReference>
<dbReference type="RefSeq" id="NP_071923.2">
    <molecule id="Q86UP0-1"/>
    <property type="nucleotide sequence ID" value="NM_022478.3"/>
</dbReference>
<dbReference type="RefSeq" id="NP_659422.2">
    <molecule id="Q86UP0-2"/>
    <property type="nucleotide sequence ID" value="NM_144985.3"/>
</dbReference>
<dbReference type="SMR" id="Q86UP0"/>
<dbReference type="BioGRID" id="122158">
    <property type="interactions" value="6"/>
</dbReference>
<dbReference type="FunCoup" id="Q86UP0">
    <property type="interactions" value="165"/>
</dbReference>
<dbReference type="IntAct" id="Q86UP0">
    <property type="interactions" value="3"/>
</dbReference>
<dbReference type="STRING" id="9606.ENSP00000380517"/>
<dbReference type="GlyCosmos" id="Q86UP0">
    <property type="glycosylation" value="3 sites, No reported glycans"/>
</dbReference>
<dbReference type="GlyGen" id="Q86UP0">
    <property type="glycosylation" value="3 sites"/>
</dbReference>
<dbReference type="iPTMnet" id="Q86UP0"/>
<dbReference type="PhosphoSitePlus" id="Q86UP0"/>
<dbReference type="BioMuta" id="CDH24"/>
<dbReference type="DMDM" id="38257450"/>
<dbReference type="MassIVE" id="Q86UP0"/>
<dbReference type="PaxDb" id="9606-ENSP00000380517"/>
<dbReference type="PeptideAtlas" id="Q86UP0"/>
<dbReference type="ProteomicsDB" id="69838">
    <molecule id="Q86UP0-1"/>
</dbReference>
<dbReference type="ProteomicsDB" id="69839">
    <molecule id="Q86UP0-2"/>
</dbReference>
<dbReference type="Antibodypedia" id="22384">
    <property type="antibodies" value="117 antibodies from 22 providers"/>
</dbReference>
<dbReference type="DNASU" id="64403"/>
<dbReference type="Ensembl" id="ENST00000267383.5">
    <molecule id="Q86UP0-1"/>
    <property type="protein sequence ID" value="ENSP00000267383.5"/>
    <property type="gene ID" value="ENSG00000139880.21"/>
</dbReference>
<dbReference type="Ensembl" id="ENST00000397359.7">
    <molecule id="Q86UP0-1"/>
    <property type="protein sequence ID" value="ENSP00000380517.3"/>
    <property type="gene ID" value="ENSG00000139880.21"/>
</dbReference>
<dbReference type="Ensembl" id="ENST00000487137.7">
    <molecule id="Q86UP0-2"/>
    <property type="protein sequence ID" value="ENSP00000434821.2"/>
    <property type="gene ID" value="ENSG00000139880.21"/>
</dbReference>
<dbReference type="Ensembl" id="ENST00000554034.5">
    <molecule id="Q86UP0-2"/>
    <property type="protein sequence ID" value="ENSP00000452493.1"/>
    <property type="gene ID" value="ENSG00000139880.21"/>
</dbReference>
<dbReference type="GeneID" id="64403"/>
<dbReference type="KEGG" id="hsa:64403"/>
<dbReference type="MANE-Select" id="ENST00000487137.7">
    <molecule id="Q86UP0-2"/>
    <property type="protein sequence ID" value="ENSP00000434821.2"/>
    <property type="RefSeq nucleotide sequence ID" value="NM_144985.4"/>
    <property type="RefSeq protein sequence ID" value="NP_659422.2"/>
</dbReference>
<dbReference type="UCSC" id="uc001wil.4">
    <molecule id="Q86UP0-1"/>
    <property type="organism name" value="human"/>
</dbReference>
<dbReference type="AGR" id="HGNC:14265"/>
<dbReference type="CTD" id="64403"/>
<dbReference type="DisGeNET" id="64403"/>
<dbReference type="GeneCards" id="CDH24"/>
<dbReference type="HGNC" id="HGNC:14265">
    <property type="gene designation" value="CDH24"/>
</dbReference>
<dbReference type="HPA" id="ENSG00000139880">
    <property type="expression patterns" value="Low tissue specificity"/>
</dbReference>
<dbReference type="MIM" id="618599">
    <property type="type" value="gene"/>
</dbReference>
<dbReference type="neXtProt" id="NX_Q86UP0"/>
<dbReference type="OpenTargets" id="ENSG00000139880"/>
<dbReference type="PharmGKB" id="PA26297"/>
<dbReference type="VEuPathDB" id="HostDB:ENSG00000139880"/>
<dbReference type="eggNOG" id="KOG3594">
    <property type="taxonomic scope" value="Eukaryota"/>
</dbReference>
<dbReference type="GeneTree" id="ENSGT00940000159567"/>
<dbReference type="HOGENOM" id="CLU_005284_3_1_1"/>
<dbReference type="InParanoid" id="Q86UP0"/>
<dbReference type="OMA" id="FETRHSY"/>
<dbReference type="OrthoDB" id="6079678at2759"/>
<dbReference type="PAN-GO" id="Q86UP0">
    <property type="GO annotations" value="9 GO annotations based on evolutionary models"/>
</dbReference>
<dbReference type="PhylomeDB" id="Q86UP0"/>
<dbReference type="TreeFam" id="TF329887"/>
<dbReference type="PathwayCommons" id="Q86UP0"/>
<dbReference type="Reactome" id="R-HSA-418990">
    <property type="pathway name" value="Adherens junctions interactions"/>
</dbReference>
<dbReference type="Reactome" id="R-HSA-9833576">
    <property type="pathway name" value="CDH11 homotypic and heterotypic interactions"/>
</dbReference>
<dbReference type="SignaLink" id="Q86UP0"/>
<dbReference type="SIGNOR" id="Q86UP0"/>
<dbReference type="BioGRID-ORCS" id="64403">
    <property type="hits" value="27 hits in 1155 CRISPR screens"/>
</dbReference>
<dbReference type="GenomeRNAi" id="64403"/>
<dbReference type="Pharos" id="Q86UP0">
    <property type="development level" value="Tbio"/>
</dbReference>
<dbReference type="PRO" id="PR:Q86UP0"/>
<dbReference type="Proteomes" id="UP000005640">
    <property type="component" value="Chromosome 14"/>
</dbReference>
<dbReference type="RNAct" id="Q86UP0">
    <property type="molecule type" value="protein"/>
</dbReference>
<dbReference type="Bgee" id="ENSG00000139880">
    <property type="expression patterns" value="Expressed in ganglionic eminence and 117 other cell types or tissues"/>
</dbReference>
<dbReference type="ExpressionAtlas" id="Q86UP0">
    <property type="expression patterns" value="baseline and differential"/>
</dbReference>
<dbReference type="GO" id="GO:0005912">
    <property type="term" value="C:adherens junction"/>
    <property type="evidence" value="ECO:0000318"/>
    <property type="project" value="GO_Central"/>
</dbReference>
<dbReference type="GO" id="GO:0016342">
    <property type="term" value="C:catenin complex"/>
    <property type="evidence" value="ECO:0000318"/>
    <property type="project" value="GO_Central"/>
</dbReference>
<dbReference type="GO" id="GO:0005911">
    <property type="term" value="C:cell-cell junction"/>
    <property type="evidence" value="ECO:0000314"/>
    <property type="project" value="UniProtKB"/>
</dbReference>
<dbReference type="GO" id="GO:0005886">
    <property type="term" value="C:plasma membrane"/>
    <property type="evidence" value="ECO:0000304"/>
    <property type="project" value="Reactome"/>
</dbReference>
<dbReference type="GO" id="GO:0045294">
    <property type="term" value="F:alpha-catenin binding"/>
    <property type="evidence" value="ECO:0000353"/>
    <property type="project" value="UniProtKB"/>
</dbReference>
<dbReference type="GO" id="GO:0008013">
    <property type="term" value="F:beta-catenin binding"/>
    <property type="evidence" value="ECO:0000353"/>
    <property type="project" value="UniProtKB"/>
</dbReference>
<dbReference type="GO" id="GO:0045296">
    <property type="term" value="F:cadherin binding"/>
    <property type="evidence" value="ECO:0000318"/>
    <property type="project" value="GO_Central"/>
</dbReference>
<dbReference type="GO" id="GO:0005509">
    <property type="term" value="F:calcium ion binding"/>
    <property type="evidence" value="ECO:0000314"/>
    <property type="project" value="MGI"/>
</dbReference>
<dbReference type="GO" id="GO:0070097">
    <property type="term" value="F:delta-catenin binding"/>
    <property type="evidence" value="ECO:0000353"/>
    <property type="project" value="UniProtKB"/>
</dbReference>
<dbReference type="GO" id="GO:0034332">
    <property type="term" value="P:adherens junction organization"/>
    <property type="evidence" value="ECO:0000318"/>
    <property type="project" value="GO_Central"/>
</dbReference>
<dbReference type="GO" id="GO:0016339">
    <property type="term" value="P:calcium-dependent cell-cell adhesion via plasma membrane cell adhesion molecules"/>
    <property type="evidence" value="ECO:0000318"/>
    <property type="project" value="GO_Central"/>
</dbReference>
<dbReference type="GO" id="GO:0016477">
    <property type="term" value="P:cell migration"/>
    <property type="evidence" value="ECO:0000318"/>
    <property type="project" value="GO_Central"/>
</dbReference>
<dbReference type="GO" id="GO:0000902">
    <property type="term" value="P:cell morphogenesis"/>
    <property type="evidence" value="ECO:0000318"/>
    <property type="project" value="GO_Central"/>
</dbReference>
<dbReference type="GO" id="GO:0098609">
    <property type="term" value="P:cell-cell adhesion"/>
    <property type="evidence" value="ECO:0000314"/>
    <property type="project" value="UniProtKB"/>
</dbReference>
<dbReference type="GO" id="GO:0044331">
    <property type="term" value="P:cell-cell adhesion mediated by cadherin"/>
    <property type="evidence" value="ECO:0000318"/>
    <property type="project" value="GO_Central"/>
</dbReference>
<dbReference type="GO" id="GO:0007043">
    <property type="term" value="P:cell-cell junction assembly"/>
    <property type="evidence" value="ECO:0000318"/>
    <property type="project" value="GO_Central"/>
</dbReference>
<dbReference type="GO" id="GO:0007156">
    <property type="term" value="P:homophilic cell adhesion via plasma membrane adhesion molecules"/>
    <property type="evidence" value="ECO:0007669"/>
    <property type="project" value="InterPro"/>
</dbReference>
<dbReference type="CDD" id="cd11304">
    <property type="entry name" value="Cadherin_repeat"/>
    <property type="match status" value="4"/>
</dbReference>
<dbReference type="FunFam" id="2.60.40.60:FF:000008">
    <property type="entry name" value="Cadherin 24"/>
    <property type="match status" value="1"/>
</dbReference>
<dbReference type="FunFam" id="2.60.40.60:FF:000009">
    <property type="entry name" value="Cadherin 24"/>
    <property type="match status" value="1"/>
</dbReference>
<dbReference type="FunFam" id="2.60.40.60:FF:000012">
    <property type="entry name" value="Cadherin 24"/>
    <property type="match status" value="1"/>
</dbReference>
<dbReference type="FunFam" id="2.60.40.60:FF:000179">
    <property type="entry name" value="Cadherin 24"/>
    <property type="match status" value="1"/>
</dbReference>
<dbReference type="FunFam" id="4.10.900.10:FF:000010">
    <property type="entry name" value="Cadherin 24"/>
    <property type="match status" value="1"/>
</dbReference>
<dbReference type="FunFam" id="2.60.40.60:FF:000123">
    <property type="entry name" value="Protocadherin beta 4"/>
    <property type="match status" value="1"/>
</dbReference>
<dbReference type="Gene3D" id="2.60.40.60">
    <property type="entry name" value="Cadherins"/>
    <property type="match status" value="5"/>
</dbReference>
<dbReference type="Gene3D" id="4.10.900.10">
    <property type="entry name" value="TCF3-CBD (Catenin binding domain)"/>
    <property type="match status" value="1"/>
</dbReference>
<dbReference type="InterPro" id="IPR039808">
    <property type="entry name" value="Cadherin"/>
</dbReference>
<dbReference type="InterPro" id="IPR002126">
    <property type="entry name" value="Cadherin-like_dom"/>
</dbReference>
<dbReference type="InterPro" id="IPR015919">
    <property type="entry name" value="Cadherin-like_sf"/>
</dbReference>
<dbReference type="InterPro" id="IPR020894">
    <property type="entry name" value="Cadherin_CS"/>
</dbReference>
<dbReference type="InterPro" id="IPR000233">
    <property type="entry name" value="Cadherin_Y-type_LIR"/>
</dbReference>
<dbReference type="InterPro" id="IPR027397">
    <property type="entry name" value="Catenin-bd_sf"/>
</dbReference>
<dbReference type="PANTHER" id="PTHR24027">
    <property type="entry name" value="CADHERIN-23"/>
    <property type="match status" value="1"/>
</dbReference>
<dbReference type="PANTHER" id="PTHR24027:SF272">
    <property type="entry name" value="CADHERIN-24"/>
    <property type="match status" value="1"/>
</dbReference>
<dbReference type="Pfam" id="PF01049">
    <property type="entry name" value="CADH_Y-type_LIR"/>
    <property type="match status" value="1"/>
</dbReference>
<dbReference type="Pfam" id="PF00028">
    <property type="entry name" value="Cadherin"/>
    <property type="match status" value="4"/>
</dbReference>
<dbReference type="PRINTS" id="PR00205">
    <property type="entry name" value="CADHERIN"/>
</dbReference>
<dbReference type="SMART" id="SM00112">
    <property type="entry name" value="CA"/>
    <property type="match status" value="4"/>
</dbReference>
<dbReference type="SUPFAM" id="SSF49313">
    <property type="entry name" value="Cadherin-like"/>
    <property type="match status" value="5"/>
</dbReference>
<dbReference type="PROSITE" id="PS00232">
    <property type="entry name" value="CADHERIN_1"/>
    <property type="match status" value="2"/>
</dbReference>
<dbReference type="PROSITE" id="PS50268">
    <property type="entry name" value="CADHERIN_2"/>
    <property type="match status" value="5"/>
</dbReference>
<accession>Q86UP0</accession>
<accession>D3DS44</accession>
<accession>Q86UP1</accession>
<accession>Q9NT84</accession>
<feature type="signal peptide" evidence="2">
    <location>
        <begin position="1"/>
        <end position="19"/>
    </location>
</feature>
<feature type="propeptide" id="PRO_0000003827" evidence="2">
    <location>
        <begin position="21"/>
        <end position="44"/>
    </location>
</feature>
<feature type="chain" id="PRO_0000003828" description="Cadherin-24">
    <location>
        <begin position="45"/>
        <end position="819"/>
    </location>
</feature>
<feature type="topological domain" description="Extracellular" evidence="2">
    <location>
        <begin position="45"/>
        <end position="641"/>
    </location>
</feature>
<feature type="transmembrane region" description="Helical" evidence="2">
    <location>
        <begin position="642"/>
        <end position="662"/>
    </location>
</feature>
<feature type="topological domain" description="Cytoplasmic" evidence="2">
    <location>
        <begin position="663"/>
        <end position="819"/>
    </location>
</feature>
<feature type="domain" description="Cadherin 1" evidence="3">
    <location>
        <begin position="46"/>
        <end position="150"/>
    </location>
</feature>
<feature type="domain" description="Cadherin 2" evidence="3">
    <location>
        <begin position="151"/>
        <end position="259"/>
    </location>
</feature>
<feature type="domain" description="Cadherin 3" evidence="3">
    <location>
        <begin position="260"/>
        <end position="374"/>
    </location>
</feature>
<feature type="domain" description="Cadherin 4" evidence="3">
    <location>
        <begin position="375"/>
        <end position="517"/>
    </location>
</feature>
<feature type="domain" description="Cadherin 5" evidence="3">
    <location>
        <begin position="517"/>
        <end position="630"/>
    </location>
</feature>
<feature type="region of interest" description="Disordered" evidence="4">
    <location>
        <begin position="768"/>
        <end position="800"/>
    </location>
</feature>
<feature type="compositionally biased region" description="Low complexity" evidence="4">
    <location>
        <begin position="771"/>
        <end position="784"/>
    </location>
</feature>
<feature type="glycosylation site" description="N-linked (GlcNAc...) asparagine" evidence="2">
    <location>
        <position position="446"/>
    </location>
</feature>
<feature type="glycosylation site" description="N-linked (GlcNAc...) asparagine" evidence="2">
    <location>
        <position position="548"/>
    </location>
</feature>
<feature type="glycosylation site" description="N-linked (GlcNAc...) asparagine" evidence="2">
    <location>
        <position position="563"/>
    </location>
</feature>
<feature type="splice variant" id="VSP_008718" description="In isoform 3." evidence="8">
    <location>
        <begin position="1"/>
        <end position="427"/>
    </location>
</feature>
<feature type="splice variant" id="VSP_008719" description="In isoform 3." evidence="8">
    <original>EGTIHTAAPLDREARAWHNLTVLATELGWSWGPERGWVPLLVAEWSAPAAPPQRSPVGSAVGIPQ</original>
    <variation>MNIVCTWYCSIHSATLFSTCTLHAYFMCFLCMLYASCGIHAHAPHMLRVNCVVCVWRVCFGVLPS</variation>
    <location>
        <begin position="428"/>
        <end position="492"/>
    </location>
</feature>
<feature type="splice variant" id="VSP_008717" description="In isoform 2." evidence="6 7">
    <location>
        <begin position="455"/>
        <end position="492"/>
    </location>
</feature>
<evidence type="ECO:0000250" key="1"/>
<evidence type="ECO:0000255" key="2"/>
<evidence type="ECO:0000255" key="3">
    <source>
        <dbReference type="PROSITE-ProRule" id="PRU00043"/>
    </source>
</evidence>
<evidence type="ECO:0000256" key="4">
    <source>
        <dbReference type="SAM" id="MobiDB-lite"/>
    </source>
</evidence>
<evidence type="ECO:0000269" key="5">
    <source>
    </source>
</evidence>
<evidence type="ECO:0000303" key="6">
    <source>
    </source>
</evidence>
<evidence type="ECO:0000303" key="7">
    <source>
    </source>
</evidence>
<evidence type="ECO:0000303" key="8">
    <source>
    </source>
</evidence>
<evidence type="ECO:0000305" key="9"/>
<proteinExistence type="evidence at protein level"/>